<proteinExistence type="inferred from homology"/>
<comment type="function">
    <text evidence="1">IGPS catalyzes the conversion of PRFAR and glutamine to IGP, AICAR and glutamate. The HisH subunit catalyzes the hydrolysis of glutamine to glutamate and ammonia as part of the synthesis of IGP and AICAR. The resulting ammonia molecule is channeled to the active site of HisF.</text>
</comment>
<comment type="catalytic activity">
    <reaction evidence="1">
        <text>5-[(5-phospho-1-deoxy-D-ribulos-1-ylimino)methylamino]-1-(5-phospho-beta-D-ribosyl)imidazole-4-carboxamide + L-glutamine = D-erythro-1-(imidazol-4-yl)glycerol 3-phosphate + 5-amino-1-(5-phospho-beta-D-ribosyl)imidazole-4-carboxamide + L-glutamate + H(+)</text>
        <dbReference type="Rhea" id="RHEA:24793"/>
        <dbReference type="ChEBI" id="CHEBI:15378"/>
        <dbReference type="ChEBI" id="CHEBI:29985"/>
        <dbReference type="ChEBI" id="CHEBI:58278"/>
        <dbReference type="ChEBI" id="CHEBI:58359"/>
        <dbReference type="ChEBI" id="CHEBI:58475"/>
        <dbReference type="ChEBI" id="CHEBI:58525"/>
        <dbReference type="EC" id="4.3.2.10"/>
    </reaction>
</comment>
<comment type="catalytic activity">
    <reaction evidence="1">
        <text>L-glutamine + H2O = L-glutamate + NH4(+)</text>
        <dbReference type="Rhea" id="RHEA:15889"/>
        <dbReference type="ChEBI" id="CHEBI:15377"/>
        <dbReference type="ChEBI" id="CHEBI:28938"/>
        <dbReference type="ChEBI" id="CHEBI:29985"/>
        <dbReference type="ChEBI" id="CHEBI:58359"/>
        <dbReference type="EC" id="3.5.1.2"/>
    </reaction>
</comment>
<comment type="pathway">
    <text evidence="1">Amino-acid biosynthesis; L-histidine biosynthesis; L-histidine from 5-phospho-alpha-D-ribose 1-diphosphate: step 5/9.</text>
</comment>
<comment type="subunit">
    <text evidence="1">Heterodimer of HisH and HisF.</text>
</comment>
<comment type="subcellular location">
    <subcellularLocation>
        <location evidence="1">Cytoplasm</location>
    </subcellularLocation>
</comment>
<sequence>MLAILDYKAGNQTSVRRALEHLGVPCAITADPAMLESAAGVIFPGVGAAGQAMSALAEAGLDKALHHVARRGQPLLGICLGCQILLESSEENAAKTLGIVPGVCRRFEDHMRQEDGSAAPVPHMGWNSLEAVAPCVLLDGIDPASEYYFVHSYYVEPDPSLVLATTTYGRTFCSLYGRDGLWAAQFHPEKSGRPGLRLLGNFYEYCRQSRQEARHAQ</sequence>
<name>HIS5_DESDA</name>
<accession>B8J215</accession>
<organism>
    <name type="scientific">Desulfovibrio desulfuricans (strain ATCC 27774 / DSM 6949 / MB)</name>
    <dbReference type="NCBI Taxonomy" id="525146"/>
    <lineage>
        <taxon>Bacteria</taxon>
        <taxon>Pseudomonadati</taxon>
        <taxon>Thermodesulfobacteriota</taxon>
        <taxon>Desulfovibrionia</taxon>
        <taxon>Desulfovibrionales</taxon>
        <taxon>Desulfovibrionaceae</taxon>
        <taxon>Desulfovibrio</taxon>
    </lineage>
</organism>
<keyword id="KW-0028">Amino-acid biosynthesis</keyword>
<keyword id="KW-0963">Cytoplasm</keyword>
<keyword id="KW-0315">Glutamine amidotransferase</keyword>
<keyword id="KW-0368">Histidine biosynthesis</keyword>
<keyword id="KW-0378">Hydrolase</keyword>
<keyword id="KW-0456">Lyase</keyword>
<reference key="1">
    <citation type="submission" date="2009-01" db="EMBL/GenBank/DDBJ databases">
        <title>Complete sequence of Desulfovibrio desulfuricans subsp. desulfuricans str. ATCC 27774.</title>
        <authorList>
            <consortium name="US DOE Joint Genome Institute"/>
            <person name="Lucas S."/>
            <person name="Copeland A."/>
            <person name="Lapidus A."/>
            <person name="Glavina del Rio T."/>
            <person name="Tice H."/>
            <person name="Bruce D."/>
            <person name="Goodwin L."/>
            <person name="Pitluck S."/>
            <person name="Sims D."/>
            <person name="Lu M."/>
            <person name="Kiss H."/>
            <person name="Meineke L."/>
            <person name="Brettin T."/>
            <person name="Detter J.C."/>
            <person name="Han C."/>
            <person name="Larimer F."/>
            <person name="Land M."/>
            <person name="Hauser L."/>
            <person name="Kyrpides N."/>
            <person name="Ovchinnikova G."/>
            <person name="Hazen T.C."/>
        </authorList>
    </citation>
    <scope>NUCLEOTIDE SEQUENCE [LARGE SCALE GENOMIC DNA]</scope>
    <source>
        <strain>ATCC 27774 / DSM 6949 / MB</strain>
    </source>
</reference>
<feature type="chain" id="PRO_1000132539" description="Imidazole glycerol phosphate synthase subunit HisH">
    <location>
        <begin position="1"/>
        <end position="217"/>
    </location>
</feature>
<feature type="domain" description="Glutamine amidotransferase type-1" evidence="1">
    <location>
        <begin position="1"/>
        <end position="212"/>
    </location>
</feature>
<feature type="active site" description="Nucleophile" evidence="1">
    <location>
        <position position="79"/>
    </location>
</feature>
<feature type="active site" evidence="1">
    <location>
        <position position="187"/>
    </location>
</feature>
<feature type="active site" evidence="1">
    <location>
        <position position="189"/>
    </location>
</feature>
<evidence type="ECO:0000255" key="1">
    <source>
        <dbReference type="HAMAP-Rule" id="MF_00278"/>
    </source>
</evidence>
<gene>
    <name evidence="1" type="primary">hisH</name>
    <name type="ordered locus">Ddes_0090</name>
</gene>
<protein>
    <recommendedName>
        <fullName evidence="1">Imidazole glycerol phosphate synthase subunit HisH</fullName>
        <ecNumber evidence="1">4.3.2.10</ecNumber>
    </recommendedName>
    <alternativeName>
        <fullName evidence="1">IGP synthase glutaminase subunit</fullName>
        <ecNumber evidence="1">3.5.1.2</ecNumber>
    </alternativeName>
    <alternativeName>
        <fullName evidence="1">IGP synthase subunit HisH</fullName>
    </alternativeName>
    <alternativeName>
        <fullName evidence="1">ImGP synthase subunit HisH</fullName>
        <shortName evidence="1">IGPS subunit HisH</shortName>
    </alternativeName>
</protein>
<dbReference type="EC" id="4.3.2.10" evidence="1"/>
<dbReference type="EC" id="3.5.1.2" evidence="1"/>
<dbReference type="EMBL" id="CP001358">
    <property type="protein sequence ID" value="ACL48010.1"/>
    <property type="molecule type" value="Genomic_DNA"/>
</dbReference>
<dbReference type="SMR" id="B8J215"/>
<dbReference type="STRING" id="525146.Ddes_0090"/>
<dbReference type="KEGG" id="dds:Ddes_0090"/>
<dbReference type="eggNOG" id="COG0118">
    <property type="taxonomic scope" value="Bacteria"/>
</dbReference>
<dbReference type="HOGENOM" id="CLU_071837_2_2_7"/>
<dbReference type="UniPathway" id="UPA00031">
    <property type="reaction ID" value="UER00010"/>
</dbReference>
<dbReference type="GO" id="GO:0005737">
    <property type="term" value="C:cytoplasm"/>
    <property type="evidence" value="ECO:0007669"/>
    <property type="project" value="UniProtKB-SubCell"/>
</dbReference>
<dbReference type="GO" id="GO:0004359">
    <property type="term" value="F:glutaminase activity"/>
    <property type="evidence" value="ECO:0007669"/>
    <property type="project" value="UniProtKB-EC"/>
</dbReference>
<dbReference type="GO" id="GO:0000107">
    <property type="term" value="F:imidazoleglycerol-phosphate synthase activity"/>
    <property type="evidence" value="ECO:0007669"/>
    <property type="project" value="UniProtKB-UniRule"/>
</dbReference>
<dbReference type="GO" id="GO:0016829">
    <property type="term" value="F:lyase activity"/>
    <property type="evidence" value="ECO:0007669"/>
    <property type="project" value="UniProtKB-KW"/>
</dbReference>
<dbReference type="GO" id="GO:0000105">
    <property type="term" value="P:L-histidine biosynthetic process"/>
    <property type="evidence" value="ECO:0007669"/>
    <property type="project" value="UniProtKB-UniRule"/>
</dbReference>
<dbReference type="CDD" id="cd01748">
    <property type="entry name" value="GATase1_IGP_Synthase"/>
    <property type="match status" value="1"/>
</dbReference>
<dbReference type="Gene3D" id="3.40.50.880">
    <property type="match status" value="1"/>
</dbReference>
<dbReference type="HAMAP" id="MF_00278">
    <property type="entry name" value="HisH"/>
    <property type="match status" value="1"/>
</dbReference>
<dbReference type="InterPro" id="IPR029062">
    <property type="entry name" value="Class_I_gatase-like"/>
</dbReference>
<dbReference type="InterPro" id="IPR017926">
    <property type="entry name" value="GATASE"/>
</dbReference>
<dbReference type="InterPro" id="IPR010139">
    <property type="entry name" value="Imidazole-glycPsynth_HisH"/>
</dbReference>
<dbReference type="NCBIfam" id="TIGR01855">
    <property type="entry name" value="IMP_synth_hisH"/>
    <property type="match status" value="1"/>
</dbReference>
<dbReference type="PANTHER" id="PTHR42701">
    <property type="entry name" value="IMIDAZOLE GLYCEROL PHOSPHATE SYNTHASE SUBUNIT HISH"/>
    <property type="match status" value="1"/>
</dbReference>
<dbReference type="PANTHER" id="PTHR42701:SF1">
    <property type="entry name" value="IMIDAZOLE GLYCEROL PHOSPHATE SYNTHASE SUBUNIT HISH"/>
    <property type="match status" value="1"/>
</dbReference>
<dbReference type="Pfam" id="PF00117">
    <property type="entry name" value="GATase"/>
    <property type="match status" value="1"/>
</dbReference>
<dbReference type="PIRSF" id="PIRSF000495">
    <property type="entry name" value="Amidotransf_hisH"/>
    <property type="match status" value="1"/>
</dbReference>
<dbReference type="SMART" id="SM01211">
    <property type="entry name" value="GATase_5"/>
    <property type="match status" value="1"/>
</dbReference>
<dbReference type="SUPFAM" id="SSF52317">
    <property type="entry name" value="Class I glutamine amidotransferase-like"/>
    <property type="match status" value="1"/>
</dbReference>
<dbReference type="PROSITE" id="PS51273">
    <property type="entry name" value="GATASE_TYPE_1"/>
    <property type="match status" value="1"/>
</dbReference>